<name>MDV1_CANGA</name>
<accession>Q6FT96</accession>
<feature type="chain" id="PRO_0000330101" description="Mitochondrial division protein 1">
    <location>
        <begin position="1"/>
        <end position="711"/>
    </location>
</feature>
<feature type="repeat" description="WD 1">
    <location>
        <begin position="402"/>
        <end position="442"/>
    </location>
</feature>
<feature type="repeat" description="WD 2">
    <location>
        <begin position="445"/>
        <end position="484"/>
    </location>
</feature>
<feature type="repeat" description="WD 3">
    <location>
        <begin position="497"/>
        <end position="536"/>
    </location>
</feature>
<feature type="repeat" description="WD 4">
    <location>
        <begin position="560"/>
        <end position="601"/>
    </location>
</feature>
<feature type="repeat" description="WD 5">
    <location>
        <begin position="602"/>
        <end position="639"/>
    </location>
</feature>
<feature type="repeat" description="WD 6">
    <location>
        <begin position="641"/>
        <end position="680"/>
    </location>
</feature>
<feature type="repeat" description="WD 7">
    <location>
        <begin position="682"/>
        <end position="711"/>
    </location>
</feature>
<feature type="region of interest" description="Disordered" evidence="3">
    <location>
        <begin position="116"/>
        <end position="139"/>
    </location>
</feature>
<feature type="coiled-coil region" evidence="2">
    <location>
        <begin position="224"/>
        <end position="281"/>
    </location>
</feature>
<gene>
    <name type="primary">MDV1</name>
    <name type="ordered locus">CAGL0G04345g</name>
</gene>
<evidence type="ECO:0000250" key="1"/>
<evidence type="ECO:0000255" key="2"/>
<evidence type="ECO:0000256" key="3">
    <source>
        <dbReference type="SAM" id="MobiDB-lite"/>
    </source>
</evidence>
<evidence type="ECO:0000305" key="4"/>
<sequence length="711" mass="80326">MTDQISHLGKTLSTAASVLIGSQDIEKNVENNLLSNSPRNPYRKTLQESLTAADFMNHETFDKLRKTRAIASTLSEDSKGLYSQRSREKYFTNKVSDKKTTFKVLSHLSDDLLKDLPETAESKSNTRDQGETKLLKESDSTDASQERIFSLYQGFEASIPVINRSVEKEHLLLEQNNQESAAQILPQMGNKPRIRSGPWEDLLESKEDTYISLDFNPERISNIKSKKELERINELANNNLVMLDIRKKLSADEIDEIKKQIQDLQLKQNLLVKKIAAIEENELFLEDIIRLIGHRSADFSNDTQIEFDQAKSLSGLNNPESMIDATRPTALERKNSIDIVETSLNEIRTSFDGSKQSIEGKDNHNALNGFFEDASNKKSRKAQPTVQKYYNSGKKLSTIPKAHDDAITCLDFDPHFSTLCTAGYMDHIVKLWDYTKKRQIGAMEGHVATISCMQVDKNYNMVATGSKDATVKLWNANDVIGRYEEGNNSEALHTLDAHLDEVSSLYIDGANLMTASQDKTIRRWDLYSGKCIQVFDVNFPSLSAYKSSFMKSNEDSMILKTVNTPIIGSIQSFDAALATGTKDGLIRLWDMRTGEVVRVLEGHMDAITSLKFDATTIISGSLDGTIRLWDLRSNNLTDIISYEKPISSLDFDAKHIVVASNEHNTHIYDRNDGNKWDLQDEEQDTTSLFVKYKERYTMEGRSNGDIGIWIV</sequence>
<proteinExistence type="inferred from homology"/>
<protein>
    <recommendedName>
        <fullName>Mitochondrial division protein 1</fullName>
    </recommendedName>
</protein>
<keyword id="KW-0175">Coiled coil</keyword>
<keyword id="KW-0472">Membrane</keyword>
<keyword id="KW-0496">Mitochondrion</keyword>
<keyword id="KW-1000">Mitochondrion outer membrane</keyword>
<keyword id="KW-1185">Reference proteome</keyword>
<keyword id="KW-0677">Repeat</keyword>
<keyword id="KW-0853">WD repeat</keyword>
<comment type="function">
    <text evidence="1">Involved in mitochondrial fission. Has a partially redundant function to CAF4 in acting as an adapter protein required to form mitochondrial fission complexes. Formation of these complexes is required to promote constriction and fission of the mitochondrial compartment at a late step in mitochondrial division (By similarity).</text>
</comment>
<comment type="subcellular location">
    <subcellularLocation>
        <location evidence="1">Mitochondrion outer membrane</location>
        <topology evidence="1">Peripheral membrane protein</topology>
        <orientation evidence="1">Cytoplasmic side</orientation>
    </subcellularLocation>
</comment>
<comment type="similarity">
    <text evidence="4">Belongs to the WD repeat MDV1/CAF4 family.</text>
</comment>
<dbReference type="EMBL" id="CR380953">
    <property type="protein sequence ID" value="CAG59475.1"/>
    <property type="molecule type" value="Genomic_DNA"/>
</dbReference>
<dbReference type="RefSeq" id="XP_446548.1">
    <property type="nucleotide sequence ID" value="XM_446548.1"/>
</dbReference>
<dbReference type="SMR" id="Q6FT96"/>
<dbReference type="FunCoup" id="Q6FT96">
    <property type="interactions" value="62"/>
</dbReference>
<dbReference type="STRING" id="284593.Q6FT96"/>
<dbReference type="EnsemblFungi" id="CAGL0G04345g-T">
    <property type="protein sequence ID" value="CAGL0G04345g-T-p1"/>
    <property type="gene ID" value="CAGL0G04345g"/>
</dbReference>
<dbReference type="KEGG" id="cgr:2888015"/>
<dbReference type="CGD" id="CAL0130372">
    <property type="gene designation" value="CAGL0G04345g"/>
</dbReference>
<dbReference type="VEuPathDB" id="FungiDB:CAGL0G04345g"/>
<dbReference type="eggNOG" id="KOG4155">
    <property type="taxonomic scope" value="Eukaryota"/>
</dbReference>
<dbReference type="HOGENOM" id="CLU_012350_1_0_1"/>
<dbReference type="InParanoid" id="Q6FT96"/>
<dbReference type="Proteomes" id="UP000002428">
    <property type="component" value="Chromosome G"/>
</dbReference>
<dbReference type="GO" id="GO:0005741">
    <property type="term" value="C:mitochondrial outer membrane"/>
    <property type="evidence" value="ECO:0007669"/>
    <property type="project" value="UniProtKB-SubCell"/>
</dbReference>
<dbReference type="GO" id="GO:1990234">
    <property type="term" value="C:transferase complex"/>
    <property type="evidence" value="ECO:0007669"/>
    <property type="project" value="UniProtKB-ARBA"/>
</dbReference>
<dbReference type="CDD" id="cd22881">
    <property type="entry name" value="Mdv1_N"/>
    <property type="match status" value="1"/>
</dbReference>
<dbReference type="CDD" id="cd00200">
    <property type="entry name" value="WD40"/>
    <property type="match status" value="1"/>
</dbReference>
<dbReference type="Gene3D" id="6.10.280.220">
    <property type="match status" value="1"/>
</dbReference>
<dbReference type="Gene3D" id="2.130.10.10">
    <property type="entry name" value="YVTN repeat-like/Quinoprotein amine dehydrogenase"/>
    <property type="match status" value="2"/>
</dbReference>
<dbReference type="InterPro" id="IPR020472">
    <property type="entry name" value="G-protein_beta_WD-40_rep"/>
</dbReference>
<dbReference type="InterPro" id="IPR015943">
    <property type="entry name" value="WD40/YVTN_repeat-like_dom_sf"/>
</dbReference>
<dbReference type="InterPro" id="IPR019775">
    <property type="entry name" value="WD40_repeat_CS"/>
</dbReference>
<dbReference type="InterPro" id="IPR036322">
    <property type="entry name" value="WD40_repeat_dom_sf"/>
</dbReference>
<dbReference type="InterPro" id="IPR001680">
    <property type="entry name" value="WD40_rpt"/>
</dbReference>
<dbReference type="PANTHER" id="PTHR22847:SF637">
    <property type="entry name" value="WD REPEAT DOMAIN 5B"/>
    <property type="match status" value="1"/>
</dbReference>
<dbReference type="PANTHER" id="PTHR22847">
    <property type="entry name" value="WD40 REPEAT PROTEIN"/>
    <property type="match status" value="1"/>
</dbReference>
<dbReference type="Pfam" id="PF00400">
    <property type="entry name" value="WD40"/>
    <property type="match status" value="4"/>
</dbReference>
<dbReference type="PRINTS" id="PR00320">
    <property type="entry name" value="GPROTEINBRPT"/>
</dbReference>
<dbReference type="SMART" id="SM00320">
    <property type="entry name" value="WD40"/>
    <property type="match status" value="6"/>
</dbReference>
<dbReference type="SUPFAM" id="SSF50978">
    <property type="entry name" value="WD40 repeat-like"/>
    <property type="match status" value="1"/>
</dbReference>
<dbReference type="PROSITE" id="PS00678">
    <property type="entry name" value="WD_REPEATS_1"/>
    <property type="match status" value="3"/>
</dbReference>
<dbReference type="PROSITE" id="PS50082">
    <property type="entry name" value="WD_REPEATS_2"/>
    <property type="match status" value="5"/>
</dbReference>
<dbReference type="PROSITE" id="PS50294">
    <property type="entry name" value="WD_REPEATS_REGION"/>
    <property type="match status" value="1"/>
</dbReference>
<organism>
    <name type="scientific">Candida glabrata (strain ATCC 2001 / BCRC 20586 / JCM 3761 / NBRC 0622 / NRRL Y-65 / CBS 138)</name>
    <name type="common">Yeast</name>
    <name type="synonym">Nakaseomyces glabratus</name>
    <dbReference type="NCBI Taxonomy" id="284593"/>
    <lineage>
        <taxon>Eukaryota</taxon>
        <taxon>Fungi</taxon>
        <taxon>Dikarya</taxon>
        <taxon>Ascomycota</taxon>
        <taxon>Saccharomycotina</taxon>
        <taxon>Saccharomycetes</taxon>
        <taxon>Saccharomycetales</taxon>
        <taxon>Saccharomycetaceae</taxon>
        <taxon>Nakaseomyces</taxon>
    </lineage>
</organism>
<reference key="1">
    <citation type="journal article" date="2004" name="Nature">
        <title>Genome evolution in yeasts.</title>
        <authorList>
            <person name="Dujon B."/>
            <person name="Sherman D."/>
            <person name="Fischer G."/>
            <person name="Durrens P."/>
            <person name="Casaregola S."/>
            <person name="Lafontaine I."/>
            <person name="de Montigny J."/>
            <person name="Marck C."/>
            <person name="Neuveglise C."/>
            <person name="Talla E."/>
            <person name="Goffard N."/>
            <person name="Frangeul L."/>
            <person name="Aigle M."/>
            <person name="Anthouard V."/>
            <person name="Babour A."/>
            <person name="Barbe V."/>
            <person name="Barnay S."/>
            <person name="Blanchin S."/>
            <person name="Beckerich J.-M."/>
            <person name="Beyne E."/>
            <person name="Bleykasten C."/>
            <person name="Boisrame A."/>
            <person name="Boyer J."/>
            <person name="Cattolico L."/>
            <person name="Confanioleri F."/>
            <person name="de Daruvar A."/>
            <person name="Despons L."/>
            <person name="Fabre E."/>
            <person name="Fairhead C."/>
            <person name="Ferry-Dumazet H."/>
            <person name="Groppi A."/>
            <person name="Hantraye F."/>
            <person name="Hennequin C."/>
            <person name="Jauniaux N."/>
            <person name="Joyet P."/>
            <person name="Kachouri R."/>
            <person name="Kerrest A."/>
            <person name="Koszul R."/>
            <person name="Lemaire M."/>
            <person name="Lesur I."/>
            <person name="Ma L."/>
            <person name="Muller H."/>
            <person name="Nicaud J.-M."/>
            <person name="Nikolski M."/>
            <person name="Oztas S."/>
            <person name="Ozier-Kalogeropoulos O."/>
            <person name="Pellenz S."/>
            <person name="Potier S."/>
            <person name="Richard G.-F."/>
            <person name="Straub M.-L."/>
            <person name="Suleau A."/>
            <person name="Swennen D."/>
            <person name="Tekaia F."/>
            <person name="Wesolowski-Louvel M."/>
            <person name="Westhof E."/>
            <person name="Wirth B."/>
            <person name="Zeniou-Meyer M."/>
            <person name="Zivanovic Y."/>
            <person name="Bolotin-Fukuhara M."/>
            <person name="Thierry A."/>
            <person name="Bouchier C."/>
            <person name="Caudron B."/>
            <person name="Scarpelli C."/>
            <person name="Gaillardin C."/>
            <person name="Weissenbach J."/>
            <person name="Wincker P."/>
            <person name="Souciet J.-L."/>
        </authorList>
    </citation>
    <scope>NUCLEOTIDE SEQUENCE [LARGE SCALE GENOMIC DNA]</scope>
    <source>
        <strain>ATCC 2001 / BCRC 20586 / JCM 3761 / NBRC 0622 / NRRL Y-65 / CBS 138</strain>
    </source>
</reference>